<proteinExistence type="inferred from homology"/>
<protein>
    <recommendedName>
        <fullName evidence="1">Small ribosomal subunit protein bS6</fullName>
    </recommendedName>
    <alternativeName>
        <fullName evidence="2">30S ribosomal protein S6</fullName>
    </alternativeName>
</protein>
<name>RS6_STREM</name>
<sequence>MAKYEILYIIRPNIEEEAKNALVARFDSILTNNGATIVESKDWEKRRLAYEINDFREGLYHIVNLEATDAVALNEFDRLSKINGDILRHMIVKLDA</sequence>
<gene>
    <name evidence="1" type="primary">rpsF</name>
    <name type="ordered locus">Sez_0342</name>
</gene>
<keyword id="KW-0687">Ribonucleoprotein</keyword>
<keyword id="KW-0689">Ribosomal protein</keyword>
<keyword id="KW-0694">RNA-binding</keyword>
<keyword id="KW-0699">rRNA-binding</keyword>
<comment type="function">
    <text evidence="1">Binds together with bS18 to 16S ribosomal RNA.</text>
</comment>
<comment type="similarity">
    <text evidence="1">Belongs to the bacterial ribosomal protein bS6 family.</text>
</comment>
<evidence type="ECO:0000255" key="1">
    <source>
        <dbReference type="HAMAP-Rule" id="MF_00360"/>
    </source>
</evidence>
<evidence type="ECO:0000305" key="2"/>
<reference key="1">
    <citation type="journal article" date="2008" name="PLoS ONE">
        <title>Genome sequence of a lancefield group C Streptococcus zooepidemicus strain causing epidemic nephritis: new information about an old disease.</title>
        <authorList>
            <person name="Beres S.B."/>
            <person name="Sesso R."/>
            <person name="Pinto S.W.L."/>
            <person name="Hoe N.P."/>
            <person name="Porcella S.F."/>
            <person name="Deleo F.R."/>
            <person name="Musser J.M."/>
        </authorList>
    </citation>
    <scope>NUCLEOTIDE SEQUENCE [LARGE SCALE GENOMIC DNA]</scope>
    <source>
        <strain>MGCS10565</strain>
    </source>
</reference>
<accession>B4U151</accession>
<organism>
    <name type="scientific">Streptococcus equi subsp. zooepidemicus (strain MGCS10565)</name>
    <dbReference type="NCBI Taxonomy" id="552526"/>
    <lineage>
        <taxon>Bacteria</taxon>
        <taxon>Bacillati</taxon>
        <taxon>Bacillota</taxon>
        <taxon>Bacilli</taxon>
        <taxon>Lactobacillales</taxon>
        <taxon>Streptococcaceae</taxon>
        <taxon>Streptococcus</taxon>
    </lineage>
</organism>
<feature type="chain" id="PRO_1000120807" description="Small ribosomal subunit protein bS6">
    <location>
        <begin position="1"/>
        <end position="96"/>
    </location>
</feature>
<dbReference type="EMBL" id="CP001129">
    <property type="protein sequence ID" value="ACG61718.1"/>
    <property type="molecule type" value="Genomic_DNA"/>
</dbReference>
<dbReference type="RefSeq" id="WP_012514997.1">
    <property type="nucleotide sequence ID" value="NC_011134.1"/>
</dbReference>
<dbReference type="SMR" id="B4U151"/>
<dbReference type="KEGG" id="sez:Sez_0342"/>
<dbReference type="HOGENOM" id="CLU_113441_5_3_9"/>
<dbReference type="Proteomes" id="UP000001873">
    <property type="component" value="Chromosome"/>
</dbReference>
<dbReference type="GO" id="GO:0005737">
    <property type="term" value="C:cytoplasm"/>
    <property type="evidence" value="ECO:0007669"/>
    <property type="project" value="UniProtKB-ARBA"/>
</dbReference>
<dbReference type="GO" id="GO:1990904">
    <property type="term" value="C:ribonucleoprotein complex"/>
    <property type="evidence" value="ECO:0007669"/>
    <property type="project" value="UniProtKB-KW"/>
</dbReference>
<dbReference type="GO" id="GO:0005840">
    <property type="term" value="C:ribosome"/>
    <property type="evidence" value="ECO:0007669"/>
    <property type="project" value="UniProtKB-KW"/>
</dbReference>
<dbReference type="GO" id="GO:0070181">
    <property type="term" value="F:small ribosomal subunit rRNA binding"/>
    <property type="evidence" value="ECO:0007669"/>
    <property type="project" value="TreeGrafter"/>
</dbReference>
<dbReference type="GO" id="GO:0003735">
    <property type="term" value="F:structural constituent of ribosome"/>
    <property type="evidence" value="ECO:0007669"/>
    <property type="project" value="InterPro"/>
</dbReference>
<dbReference type="GO" id="GO:0006412">
    <property type="term" value="P:translation"/>
    <property type="evidence" value="ECO:0007669"/>
    <property type="project" value="UniProtKB-UniRule"/>
</dbReference>
<dbReference type="CDD" id="cd00473">
    <property type="entry name" value="bS6"/>
    <property type="match status" value="1"/>
</dbReference>
<dbReference type="FunFam" id="3.30.70.60:FF:000002">
    <property type="entry name" value="30S ribosomal protein S6"/>
    <property type="match status" value="1"/>
</dbReference>
<dbReference type="Gene3D" id="3.30.70.60">
    <property type="match status" value="1"/>
</dbReference>
<dbReference type="HAMAP" id="MF_00360">
    <property type="entry name" value="Ribosomal_bS6"/>
    <property type="match status" value="1"/>
</dbReference>
<dbReference type="InterPro" id="IPR000529">
    <property type="entry name" value="Ribosomal_bS6"/>
</dbReference>
<dbReference type="InterPro" id="IPR035980">
    <property type="entry name" value="Ribosomal_bS6_sf"/>
</dbReference>
<dbReference type="InterPro" id="IPR020814">
    <property type="entry name" value="Ribosomal_S6_plastid/chlpt"/>
</dbReference>
<dbReference type="InterPro" id="IPR014717">
    <property type="entry name" value="Transl_elong_EF1B/ribsomal_bS6"/>
</dbReference>
<dbReference type="NCBIfam" id="TIGR00166">
    <property type="entry name" value="S6"/>
    <property type="match status" value="1"/>
</dbReference>
<dbReference type="PANTHER" id="PTHR21011">
    <property type="entry name" value="MITOCHONDRIAL 28S RIBOSOMAL PROTEIN S6"/>
    <property type="match status" value="1"/>
</dbReference>
<dbReference type="PANTHER" id="PTHR21011:SF1">
    <property type="entry name" value="SMALL RIBOSOMAL SUBUNIT PROTEIN BS6M"/>
    <property type="match status" value="1"/>
</dbReference>
<dbReference type="Pfam" id="PF01250">
    <property type="entry name" value="Ribosomal_S6"/>
    <property type="match status" value="1"/>
</dbReference>
<dbReference type="SUPFAM" id="SSF54995">
    <property type="entry name" value="Ribosomal protein S6"/>
    <property type="match status" value="1"/>
</dbReference>